<organism>
    <name type="scientific">Escherichia coli (strain K12)</name>
    <dbReference type="NCBI Taxonomy" id="83333"/>
    <lineage>
        <taxon>Bacteria</taxon>
        <taxon>Pseudomonadati</taxon>
        <taxon>Pseudomonadota</taxon>
        <taxon>Gammaproteobacteria</taxon>
        <taxon>Enterobacterales</taxon>
        <taxon>Enterobacteriaceae</taxon>
        <taxon>Escherichia</taxon>
    </lineage>
</organism>
<dbReference type="EMBL" id="X54153">
    <property type="protein sequence ID" value="CAA38092.1"/>
    <property type="molecule type" value="Genomic_DNA"/>
</dbReference>
<dbReference type="EMBL" id="U73857">
    <property type="protein sequence ID" value="AAB18100.1"/>
    <property type="status" value="ALT_INIT"/>
    <property type="molecule type" value="Genomic_DNA"/>
</dbReference>
<dbReference type="EMBL" id="U00096">
    <property type="protein sequence ID" value="AAC73480.1"/>
    <property type="molecule type" value="Genomic_DNA"/>
</dbReference>
<dbReference type="EMBL" id="AP009048">
    <property type="protein sequence ID" value="BAE76158.1"/>
    <property type="molecule type" value="Genomic_DNA"/>
</dbReference>
<dbReference type="PIR" id="A64766">
    <property type="entry name" value="A64766"/>
</dbReference>
<dbReference type="RefSeq" id="NP_414911.1">
    <property type="nucleotide sequence ID" value="NC_000913.3"/>
</dbReference>
<dbReference type="RefSeq" id="WP_001301663.1">
    <property type="nucleotide sequence ID" value="NZ_STEB01000007.1"/>
</dbReference>
<dbReference type="PDB" id="7P34">
    <property type="method" value="EM"/>
    <property type="resolution" value="3.59 A"/>
    <property type="chains" value="A/B=1-406"/>
</dbReference>
<dbReference type="PDBsum" id="7P34"/>
<dbReference type="SMR" id="P0AFY6"/>
<dbReference type="BioGRID" id="4259483">
    <property type="interactions" value="94"/>
</dbReference>
<dbReference type="FunCoup" id="P0AFY6">
    <property type="interactions" value="56"/>
</dbReference>
<dbReference type="STRING" id="511145.b0377"/>
<dbReference type="TCDB" id="9.A.18.1.1">
    <property type="family name" value="the peptide uptake permease (pup) family"/>
</dbReference>
<dbReference type="jPOST" id="P0AFY6"/>
<dbReference type="PaxDb" id="511145-b0377"/>
<dbReference type="EnsemblBacteria" id="AAC73480">
    <property type="protein sequence ID" value="AAC73480"/>
    <property type="gene ID" value="b0377"/>
</dbReference>
<dbReference type="GeneID" id="946884"/>
<dbReference type="KEGG" id="ecj:JW0368"/>
<dbReference type="KEGG" id="eco:b0377"/>
<dbReference type="PATRIC" id="fig|1411691.4.peg.1901"/>
<dbReference type="EchoBASE" id="EB0921"/>
<dbReference type="eggNOG" id="COG1133">
    <property type="taxonomic scope" value="Bacteria"/>
</dbReference>
<dbReference type="HOGENOM" id="CLU_045533_0_0_6"/>
<dbReference type="InParanoid" id="P0AFY6"/>
<dbReference type="OMA" id="HWVFRWR"/>
<dbReference type="OrthoDB" id="8233587at2"/>
<dbReference type="PhylomeDB" id="P0AFY6"/>
<dbReference type="BioCyc" id="EcoCyc:SBMA-MONOMER"/>
<dbReference type="BioCyc" id="MetaCyc:SBMA-MONOMER"/>
<dbReference type="PRO" id="PR:P0AFY6"/>
<dbReference type="Proteomes" id="UP000000625">
    <property type="component" value="Chromosome"/>
</dbReference>
<dbReference type="GO" id="GO:0005886">
    <property type="term" value="C:plasma membrane"/>
    <property type="evidence" value="ECO:0000314"/>
    <property type="project" value="EcoCyc"/>
</dbReference>
<dbReference type="GO" id="GO:0005524">
    <property type="term" value="F:ATP binding"/>
    <property type="evidence" value="ECO:0007669"/>
    <property type="project" value="InterPro"/>
</dbReference>
<dbReference type="GO" id="GO:0015638">
    <property type="term" value="F:microcin transmembrane transporter activity"/>
    <property type="evidence" value="ECO:0000315"/>
    <property type="project" value="EcoCyc"/>
</dbReference>
<dbReference type="GO" id="GO:1904680">
    <property type="term" value="F:peptide transmembrane transporter activity"/>
    <property type="evidence" value="ECO:0000314"/>
    <property type="project" value="EcoCyc"/>
</dbReference>
<dbReference type="GO" id="GO:0042803">
    <property type="term" value="F:protein homodimerization activity"/>
    <property type="evidence" value="ECO:0000314"/>
    <property type="project" value="EcoCyc"/>
</dbReference>
<dbReference type="GO" id="GO:0015291">
    <property type="term" value="F:secondary active transmembrane transporter activity"/>
    <property type="evidence" value="ECO:0000314"/>
    <property type="project" value="EcoCyc"/>
</dbReference>
<dbReference type="GO" id="GO:0042885">
    <property type="term" value="P:microcin B17 transport"/>
    <property type="evidence" value="ECO:0000315"/>
    <property type="project" value="EcoCyc"/>
</dbReference>
<dbReference type="GO" id="GO:0042884">
    <property type="term" value="P:microcin transport"/>
    <property type="evidence" value="ECO:0000315"/>
    <property type="project" value="EcoCyc"/>
</dbReference>
<dbReference type="GO" id="GO:0015833">
    <property type="term" value="P:peptide transport"/>
    <property type="evidence" value="ECO:0000314"/>
    <property type="project" value="EcoCyc"/>
</dbReference>
<dbReference type="GO" id="GO:0015031">
    <property type="term" value="P:protein transport"/>
    <property type="evidence" value="ECO:0007669"/>
    <property type="project" value="UniProtKB-KW"/>
</dbReference>
<dbReference type="GO" id="GO:0046677">
    <property type="term" value="P:response to antibiotic"/>
    <property type="evidence" value="ECO:0000315"/>
    <property type="project" value="EcoCyc"/>
</dbReference>
<dbReference type="InterPro" id="IPR036640">
    <property type="entry name" value="ABC1_TM_sf"/>
</dbReference>
<dbReference type="InterPro" id="IPR050835">
    <property type="entry name" value="ABC_transporter_sub-D"/>
</dbReference>
<dbReference type="InterPro" id="IPR009248">
    <property type="entry name" value="SbmA_BacA"/>
</dbReference>
<dbReference type="NCBIfam" id="NF008306">
    <property type="entry name" value="PRK11098.1"/>
    <property type="match status" value="1"/>
</dbReference>
<dbReference type="NCBIfam" id="NF009036">
    <property type="entry name" value="PRK12369.1"/>
    <property type="match status" value="1"/>
</dbReference>
<dbReference type="PANTHER" id="PTHR11384">
    <property type="entry name" value="ATP-BINDING CASSETTE, SUB-FAMILY D MEMBER"/>
    <property type="match status" value="1"/>
</dbReference>
<dbReference type="PANTHER" id="PTHR11384:SF59">
    <property type="entry name" value="LYSOSOMAL COBALAMIN TRANSPORTER ABCD4"/>
    <property type="match status" value="1"/>
</dbReference>
<dbReference type="Pfam" id="PF05992">
    <property type="entry name" value="SbmA_BacA"/>
    <property type="match status" value="1"/>
</dbReference>
<dbReference type="SUPFAM" id="SSF90123">
    <property type="entry name" value="ABC transporter transmembrane region"/>
    <property type="match status" value="1"/>
</dbReference>
<name>SBMA_ECOLI</name>
<feature type="chain" id="PRO_0000097603" description="Peptide antibiotic transporter SbmA">
    <location>
        <begin position="1"/>
        <end position="406"/>
    </location>
</feature>
<feature type="topological domain" description="Periplasmic" evidence="1">
    <location>
        <begin position="1"/>
        <end position="11"/>
    </location>
</feature>
<feature type="transmembrane region" description="Helical" evidence="1">
    <location>
        <begin position="12"/>
        <end position="32"/>
    </location>
</feature>
<feature type="topological domain" description="Cytoplasmic" evidence="1">
    <location>
        <begin position="33"/>
        <end position="56"/>
    </location>
</feature>
<feature type="transmembrane region" description="Helical" evidence="1">
    <location>
        <begin position="57"/>
        <end position="77"/>
    </location>
</feature>
<feature type="topological domain" description="Periplasmic" evidence="1">
    <location>
        <begin position="78"/>
        <end position="87"/>
    </location>
</feature>
<feature type="transmembrane region" description="Helical" evidence="1">
    <location>
        <begin position="88"/>
        <end position="108"/>
    </location>
</feature>
<feature type="topological domain" description="Cytoplasmic" evidence="1">
    <location>
        <begin position="109"/>
        <end position="137"/>
    </location>
</feature>
<feature type="transmembrane region" description="Helical" evidence="1">
    <location>
        <begin position="138"/>
        <end position="158"/>
    </location>
</feature>
<feature type="topological domain" description="Periplasmic" evidence="1">
    <location>
        <begin position="159"/>
        <end position="205"/>
    </location>
</feature>
<feature type="transmembrane region" description="Helical" evidence="1">
    <location>
        <begin position="206"/>
        <end position="226"/>
    </location>
</feature>
<feature type="topological domain" description="Cytoplasmic" evidence="1">
    <location>
        <begin position="227"/>
        <end position="242"/>
    </location>
</feature>
<feature type="transmembrane region" description="Helical" evidence="1">
    <location>
        <begin position="243"/>
        <end position="263"/>
    </location>
</feature>
<feature type="topological domain" description="Periplasmic" evidence="1">
    <location>
        <begin position="264"/>
        <end position="331"/>
    </location>
</feature>
<feature type="transmembrane region" description="Helical" evidence="1">
    <location>
        <begin position="332"/>
        <end position="352"/>
    </location>
</feature>
<feature type="topological domain" description="Cytoplasmic" evidence="1">
    <location>
        <begin position="353"/>
        <end position="406"/>
    </location>
</feature>
<feature type="sequence conflict" description="In Ref. 1; CAA38092." evidence="8" ref="1">
    <original>S</original>
    <variation>T</variation>
    <location>
        <position position="388"/>
    </location>
</feature>
<reference key="1">
    <citation type="submission" date="1990-07" db="EMBL/GenBank/DDBJ databases">
        <authorList>
            <person name="Moreno F."/>
        </authorList>
    </citation>
    <scope>NUCLEOTIDE SEQUENCE [GENOMIC DNA]</scope>
    <source>
        <strain>K12</strain>
    </source>
</reference>
<reference key="2">
    <citation type="submission" date="1997-01" db="EMBL/GenBank/DDBJ databases">
        <title>Sequence of minutes 4-25 of Escherichia coli.</title>
        <authorList>
            <person name="Chung E."/>
            <person name="Allen E."/>
            <person name="Araujo R."/>
            <person name="Aparicio A.M."/>
            <person name="Davis K."/>
            <person name="Duncan M."/>
            <person name="Federspiel N."/>
            <person name="Hyman R."/>
            <person name="Kalman S."/>
            <person name="Komp C."/>
            <person name="Kurdi O."/>
            <person name="Lew H."/>
            <person name="Lin D."/>
            <person name="Namath A."/>
            <person name="Oefner P."/>
            <person name="Roberts D."/>
            <person name="Schramm S."/>
            <person name="Davis R.W."/>
        </authorList>
    </citation>
    <scope>NUCLEOTIDE SEQUENCE [LARGE SCALE GENOMIC DNA]</scope>
    <source>
        <strain>K12 / MG1655 / ATCC 47076</strain>
    </source>
</reference>
<reference key="3">
    <citation type="journal article" date="1997" name="Science">
        <title>The complete genome sequence of Escherichia coli K-12.</title>
        <authorList>
            <person name="Blattner F.R."/>
            <person name="Plunkett G. III"/>
            <person name="Bloch C.A."/>
            <person name="Perna N.T."/>
            <person name="Burland V."/>
            <person name="Riley M."/>
            <person name="Collado-Vides J."/>
            <person name="Glasner J.D."/>
            <person name="Rode C.K."/>
            <person name="Mayhew G.F."/>
            <person name="Gregor J."/>
            <person name="Davis N.W."/>
            <person name="Kirkpatrick H.A."/>
            <person name="Goeden M.A."/>
            <person name="Rose D.J."/>
            <person name="Mau B."/>
            <person name="Shao Y."/>
        </authorList>
    </citation>
    <scope>NUCLEOTIDE SEQUENCE [LARGE SCALE GENOMIC DNA]</scope>
    <source>
        <strain>K12 / MG1655 / ATCC 47076</strain>
    </source>
</reference>
<reference key="4">
    <citation type="journal article" date="2006" name="Mol. Syst. Biol.">
        <title>Highly accurate genome sequences of Escherichia coli K-12 strains MG1655 and W3110.</title>
        <authorList>
            <person name="Hayashi K."/>
            <person name="Morooka N."/>
            <person name="Yamamoto Y."/>
            <person name="Fujita K."/>
            <person name="Isono K."/>
            <person name="Choi S."/>
            <person name="Ohtsubo E."/>
            <person name="Baba T."/>
            <person name="Wanner B.L."/>
            <person name="Mori H."/>
            <person name="Horiuchi T."/>
        </authorList>
    </citation>
    <scope>NUCLEOTIDE SEQUENCE [LARGE SCALE GENOMIC DNA]</scope>
    <source>
        <strain>K12 / W3110 / ATCC 27325 / DSM 5911</strain>
    </source>
</reference>
<reference key="5">
    <citation type="journal article" date="1986" name="J. Gen. Microbiol.">
        <title>Identification, mapping, cloning and characterization of a gene (sbmA) required for microcin B17 action on Escherichia coli K12.</title>
        <authorList>
            <person name="Lavina M."/>
            <person name="Pugsley A.P."/>
            <person name="Moreno F."/>
        </authorList>
    </citation>
    <scope>FUNCTION</scope>
</reference>
<reference key="6">
    <citation type="journal article" date="1995" name="J. Bacteriol.">
        <title>The peptide antibiotic microcin 25 is imported through the TonB pathway and the SbmA protein.</title>
        <authorList>
            <person name="Salomon R.A."/>
            <person name="Farias R.N."/>
        </authorList>
    </citation>
    <scope>FUNCTION</scope>
</reference>
<reference key="7">
    <citation type="journal article" date="2005" name="Science">
        <title>Global topology analysis of the Escherichia coli inner membrane proteome.</title>
        <authorList>
            <person name="Daley D.O."/>
            <person name="Rapp M."/>
            <person name="Granseth E."/>
            <person name="Melen K."/>
            <person name="Drew D."/>
            <person name="von Heijne G."/>
        </authorList>
    </citation>
    <scope>TOPOLOGY [LARGE SCALE ANALYSIS]</scope>
    <scope>SUBCELLULAR LOCATION</scope>
    <source>
        <strain>K12 / MG1655 / ATCC 47076</strain>
    </source>
</reference>
<reference key="8">
    <citation type="journal article" date="2007" name="Mol. Microbiol.">
        <title>Role of the Escherichia coli SbmA in the antimicrobial activity of proline-rich peptides.</title>
        <authorList>
            <person name="Mattiuzzo M."/>
            <person name="Bandiera A."/>
            <person name="Gennaro R."/>
            <person name="Benincasa M."/>
            <person name="Pacor S."/>
            <person name="Antcheva N."/>
            <person name="Scocchi M."/>
        </authorList>
    </citation>
    <scope>FUNCTION</scope>
    <scope>DISRUPTION PHENOTYPE</scope>
</reference>
<reference key="9">
    <citation type="journal article" date="2016" name="Microbiology">
        <title>Inner membrane proteins YgdD and SbmA are required for the complete susceptibility of Escherichia coli to the proline-rich antimicrobial peptide arasin 1(1-25).</title>
        <authorList>
            <person name="Paulsen V.S."/>
            <person name="Mardirossian M."/>
            <person name="Blencke H.M."/>
            <person name="Benincasa M."/>
            <person name="Runti G."/>
            <person name="Nepa M."/>
            <person name="Haug T."/>
            <person name="Stensvaag K."/>
            <person name="Scocchi M."/>
        </authorList>
    </citation>
    <scope>FUNCTION</scope>
    <scope>DISRUPTION PHENOTYPE</scope>
    <source>
        <strain>K12 / BW25113</strain>
    </source>
</reference>
<reference key="10">
    <citation type="journal article" date="2023" name="Nat. Chem. Biol.">
        <title>Structural basis for translation inhibition by the glycosylated drosocin peptide.</title>
        <authorList>
            <person name="Koller T.O."/>
            <person name="Morici M."/>
            <person name="Berger M."/>
            <person name="Safdari H.A."/>
            <person name="Lele D.S."/>
            <person name="Beckert B."/>
            <person name="Kaur K.J."/>
            <person name="Wilson D.N."/>
        </authorList>
    </citation>
    <scope>FUNCTION</scope>
    <scope>DISRUPTION PHENOTYPE</scope>
</reference>
<keyword id="KW-0002">3D-structure</keyword>
<keyword id="KW-0997">Cell inner membrane</keyword>
<keyword id="KW-1003">Cell membrane</keyword>
<keyword id="KW-0472">Membrane</keyword>
<keyword id="KW-0571">Peptide transport</keyword>
<keyword id="KW-0653">Protein transport</keyword>
<keyword id="KW-1185">Reference proteome</keyword>
<keyword id="KW-0812">Transmembrane</keyword>
<keyword id="KW-1133">Transmembrane helix</keyword>
<keyword id="KW-0813">Transport</keyword>
<sequence>MFKSFFPKPGTFFLSAFVWALIAVIFWQAGGGDWVARITGASGQIPISAARFWSLDFLIFYAYYIVCVGLFALFWFIYSPHRWQYWSILGTALIIFVTWFLVEVGVAVNAWYAPFYDLIQTALSSPHKVTIEQFYREVGVFLGIALIAVVISVLNNFFVSHYVFRWRTAMNEYYMANWQQLRHIEGAAQRVQEDTMRFASTLENMGVSFINAIMTLIAFLPVLVTLSAHVPELPIIGHIPYGLVIAAIVWSLMGTGLLAVVGIKLPGLEFKNQRVEAAYRKELVYGEDDATRATPPTVRELFSAVRKNYFRLYFHYMYFNIARILYLQVDNVFGLFLLFPSIVAGTITLGLMTQITNVFGQVRGAFQYLINSWTTLVELMSIYKRLRSFEHELDGDKIQEVTHTLS</sequence>
<gene>
    <name type="primary">sbmA</name>
    <name type="ordered locus">b0377</name>
    <name type="ordered locus">JW0368</name>
</gene>
<evidence type="ECO:0000255" key="1"/>
<evidence type="ECO:0000269" key="2">
    <source>
    </source>
</evidence>
<evidence type="ECO:0000269" key="3">
    <source>
    </source>
</evidence>
<evidence type="ECO:0000269" key="4">
    <source>
    </source>
</evidence>
<evidence type="ECO:0000269" key="5">
    <source>
    </source>
</evidence>
<evidence type="ECO:0000269" key="6">
    <source>
    </source>
</evidence>
<evidence type="ECO:0000269" key="7">
    <source>
    </source>
</evidence>
<evidence type="ECO:0000305" key="8"/>
<evidence type="ECO:0000305" key="9">
    <source>
    </source>
</evidence>
<proteinExistence type="evidence at protein level"/>
<comment type="function">
    <text evidence="3 5 6 7 9">Uptake of antimicrobial peptides. Required for the transport of microcin B17 (MccB17), microcin 25 (Mcc25) and proline-rich antimicrobial peptides (such as Cathelicidin-3, Arasin 1 and Dro/Drosocin) into the cell.</text>
</comment>
<comment type="subcellular location">
    <subcellularLocation>
        <location evidence="2">Cell inner membrane</location>
        <topology evidence="2">Multi-pass membrane protein</topology>
    </subcellularLocation>
</comment>
<comment type="disruption phenotype">
    <text evidence="3 4 6">Mutants are resistant to proline-rich antimicrobial peptides of eukaryotic origin.</text>
</comment>
<comment type="similarity">
    <text evidence="8">Belongs to the peptide uptake permease (PUP) (TC 9.A.18) family.</text>
</comment>
<comment type="sequence caution" evidence="8">
    <conflict type="erroneous initiation">
        <sequence resource="EMBL-CDS" id="AAB18100"/>
    </conflict>
    <text>Extended N-terminus.</text>
</comment>
<protein>
    <recommendedName>
        <fullName>Peptide antibiotic transporter SbmA</fullName>
    </recommendedName>
</protein>
<accession>P0AFY6</accession>
<accession>P24212</accession>
<accession>P71313</accession>
<accession>P75702</accession>
<accession>Q2MC48</accession>